<reference key="1">
    <citation type="journal article" date="2006" name="Lancet">
        <title>Complete genome sequence of USA300, an epidemic clone of community-acquired meticillin-resistant Staphylococcus aureus.</title>
        <authorList>
            <person name="Diep B.A."/>
            <person name="Gill S.R."/>
            <person name="Chang R.F."/>
            <person name="Phan T.H."/>
            <person name="Chen J.H."/>
            <person name="Davidson M.G."/>
            <person name="Lin F."/>
            <person name="Lin J."/>
            <person name="Carleton H.A."/>
            <person name="Mongodin E.F."/>
            <person name="Sensabaugh G.F."/>
            <person name="Perdreau-Remington F."/>
        </authorList>
    </citation>
    <scope>NUCLEOTIDE SEQUENCE [LARGE SCALE GENOMIC DNA]</scope>
    <source>
        <strain>USA300</strain>
    </source>
</reference>
<name>TDCB_STAA3</name>
<dbReference type="EC" id="4.3.1.19"/>
<dbReference type="EMBL" id="CP000255">
    <property type="protein sequence ID" value="ABD20948.1"/>
    <property type="molecule type" value="Genomic_DNA"/>
</dbReference>
<dbReference type="RefSeq" id="WP_000210828.1">
    <property type="nucleotide sequence ID" value="NZ_CP027476.1"/>
</dbReference>
<dbReference type="SMR" id="Q2FH01"/>
<dbReference type="KEGG" id="saa:SAUSA300_1330"/>
<dbReference type="HOGENOM" id="CLU_021152_4_2_9"/>
<dbReference type="OMA" id="LIHPFDH"/>
<dbReference type="UniPathway" id="UPA00052">
    <property type="reaction ID" value="UER00507"/>
</dbReference>
<dbReference type="Proteomes" id="UP000001939">
    <property type="component" value="Chromosome"/>
</dbReference>
<dbReference type="GO" id="GO:0003941">
    <property type="term" value="F:L-serine ammonia-lyase activity"/>
    <property type="evidence" value="ECO:0007669"/>
    <property type="project" value="TreeGrafter"/>
</dbReference>
<dbReference type="GO" id="GO:0000166">
    <property type="term" value="F:nucleotide binding"/>
    <property type="evidence" value="ECO:0007669"/>
    <property type="project" value="UniProtKB-KW"/>
</dbReference>
<dbReference type="GO" id="GO:0030170">
    <property type="term" value="F:pyridoxal phosphate binding"/>
    <property type="evidence" value="ECO:0007669"/>
    <property type="project" value="InterPro"/>
</dbReference>
<dbReference type="GO" id="GO:0004794">
    <property type="term" value="F:threonine deaminase activity"/>
    <property type="evidence" value="ECO:0007669"/>
    <property type="project" value="UniProtKB-EC"/>
</dbReference>
<dbReference type="GO" id="GO:0009097">
    <property type="term" value="P:isoleucine biosynthetic process"/>
    <property type="evidence" value="ECO:0007669"/>
    <property type="project" value="TreeGrafter"/>
</dbReference>
<dbReference type="GO" id="GO:0006565">
    <property type="term" value="P:L-serine catabolic process"/>
    <property type="evidence" value="ECO:0007669"/>
    <property type="project" value="TreeGrafter"/>
</dbReference>
<dbReference type="GO" id="GO:0070689">
    <property type="term" value="P:L-threonine catabolic process to propionate"/>
    <property type="evidence" value="ECO:0007669"/>
    <property type="project" value="UniProtKB-UniPathway"/>
</dbReference>
<dbReference type="CDD" id="cd01562">
    <property type="entry name" value="Thr-dehyd"/>
    <property type="match status" value="1"/>
</dbReference>
<dbReference type="FunFam" id="3.40.50.1100:FF:000007">
    <property type="entry name" value="L-threonine dehydratase catabolic TdcB"/>
    <property type="match status" value="1"/>
</dbReference>
<dbReference type="Gene3D" id="3.40.50.1100">
    <property type="match status" value="2"/>
</dbReference>
<dbReference type="InterPro" id="IPR050147">
    <property type="entry name" value="Ser/Thr_Dehydratase"/>
</dbReference>
<dbReference type="InterPro" id="IPR000634">
    <property type="entry name" value="Ser/Thr_deHydtase_PyrdxlP-BS"/>
</dbReference>
<dbReference type="InterPro" id="IPR005789">
    <property type="entry name" value="Thr_deHydtase_catblc"/>
</dbReference>
<dbReference type="InterPro" id="IPR001926">
    <property type="entry name" value="TrpB-like_PALP"/>
</dbReference>
<dbReference type="InterPro" id="IPR036052">
    <property type="entry name" value="TrpB-like_PALP_sf"/>
</dbReference>
<dbReference type="NCBIfam" id="TIGR01127">
    <property type="entry name" value="ilvA_1Cterm"/>
    <property type="match status" value="1"/>
</dbReference>
<dbReference type="NCBIfam" id="NF006389">
    <property type="entry name" value="PRK08638.1"/>
    <property type="match status" value="1"/>
</dbReference>
<dbReference type="PANTHER" id="PTHR48078:SF6">
    <property type="entry name" value="L-THREONINE DEHYDRATASE CATABOLIC TDCB"/>
    <property type="match status" value="1"/>
</dbReference>
<dbReference type="PANTHER" id="PTHR48078">
    <property type="entry name" value="THREONINE DEHYDRATASE, MITOCHONDRIAL-RELATED"/>
    <property type="match status" value="1"/>
</dbReference>
<dbReference type="Pfam" id="PF00291">
    <property type="entry name" value="PALP"/>
    <property type="match status" value="1"/>
</dbReference>
<dbReference type="SUPFAM" id="SSF53686">
    <property type="entry name" value="Tryptophan synthase beta subunit-like PLP-dependent enzymes"/>
    <property type="match status" value="1"/>
</dbReference>
<dbReference type="PROSITE" id="PS00165">
    <property type="entry name" value="DEHYDRATASE_SER_THR"/>
    <property type="match status" value="1"/>
</dbReference>
<accession>Q2FH01</accession>
<gene>
    <name type="primary">tdcB</name>
    <name type="ordered locus">SAUSA300_1330</name>
</gene>
<sequence>MTTNTVTLQTAHIVSLGDIEEAKASIKPFIRRTPLIKSMYLSQSITKGNVFLKLENMQFTGSFKFRGASNKINHLTDEQKEKGIIAASAGNHAQGVALTAKLLGIDATIVMPETAPQAKQQATKGYGAKVILKGKNFNETRLYMEELAKENGMTIVHPYDDKFVMAGQGTIGLEILDDIWNVNTVIVPVGGGGLIAGIATALKSFNPSIHIIGVQSENVHGMAESFYKRDLTEHRVDSTIADGCDVKVPGEQTYEVVKHLVDEFILVTEEEIEHAMKDLMQRAKIITEGAGALPTAAILSGKINNKWLEDKNVVALVSGGNVDLTRVSGVIEHGLNIADTSKGVVG</sequence>
<keyword id="KW-0021">Allosteric enzyme</keyword>
<keyword id="KW-0456">Lyase</keyword>
<keyword id="KW-0547">Nucleotide-binding</keyword>
<keyword id="KW-0663">Pyridoxal phosphate</keyword>
<evidence type="ECO:0000250" key="1"/>
<evidence type="ECO:0000305" key="2"/>
<protein>
    <recommendedName>
        <fullName>L-threonine dehydratase catabolic TdcB</fullName>
        <ecNumber>4.3.1.19</ecNumber>
    </recommendedName>
    <alternativeName>
        <fullName>Threonine deaminase</fullName>
    </alternativeName>
</protein>
<feature type="chain" id="PRO_0000287334" description="L-threonine dehydratase catabolic TdcB">
    <location>
        <begin position="1"/>
        <end position="346"/>
    </location>
</feature>
<feature type="binding site" evidence="1">
    <location>
        <begin position="59"/>
        <end position="60"/>
    </location>
    <ligand>
        <name>AMP</name>
        <dbReference type="ChEBI" id="CHEBI:456215"/>
    </ligand>
</feature>
<feature type="binding site" evidence="1">
    <location>
        <position position="94"/>
    </location>
    <ligand>
        <name>AMP</name>
        <dbReference type="ChEBI" id="CHEBI:456215"/>
    </ligand>
</feature>
<feature type="binding site" evidence="1">
    <location>
        <begin position="125"/>
        <end position="126"/>
    </location>
    <ligand>
        <name>AMP</name>
        <dbReference type="ChEBI" id="CHEBI:456215"/>
    </ligand>
</feature>
<feature type="binding site" evidence="1">
    <location>
        <position position="321"/>
    </location>
    <ligand>
        <name>AMP</name>
        <dbReference type="ChEBI" id="CHEBI:456215"/>
    </ligand>
</feature>
<feature type="modified residue" description="N6-(pyridoxal phosphate)lysine" evidence="1">
    <location>
        <position position="64"/>
    </location>
</feature>
<comment type="function">
    <text evidence="1">Catalyzes the anaerobic formation of alpha-ketobutyrate and ammonia from threonine in a two-step reaction. The first step involved a dehydration of threonine and a production of enamine intermediates (aminocrotonate), which tautomerizes to its imine form (iminobutyrate). Both intermediates are unstable and short-lived. The second step is the nonenzymatic hydrolysis of the enamine/imine intermediates to form 2-ketobutyrate and free ammonia. In the low water environment of the cell, the second step is accelerated by RidA (By similarity).</text>
</comment>
<comment type="catalytic activity">
    <reaction>
        <text>L-threonine = 2-oxobutanoate + NH4(+)</text>
        <dbReference type="Rhea" id="RHEA:22108"/>
        <dbReference type="ChEBI" id="CHEBI:16763"/>
        <dbReference type="ChEBI" id="CHEBI:28938"/>
        <dbReference type="ChEBI" id="CHEBI:57926"/>
        <dbReference type="EC" id="4.3.1.19"/>
    </reaction>
</comment>
<comment type="cofactor">
    <cofactor evidence="1">
        <name>pyridoxal 5'-phosphate</name>
        <dbReference type="ChEBI" id="CHEBI:597326"/>
    </cofactor>
</comment>
<comment type="activity regulation">
    <text evidence="1">Each protein molecule can bind up to four molecules of AMP, which act as an allosteric activator to the enzyme.</text>
</comment>
<comment type="pathway">
    <text>Amino-acid degradation; L-threonine degradation via propanoate pathway; propanoate from L-threonine: step 1/4.</text>
</comment>
<comment type="subunit">
    <text evidence="1">In the native structure, TdcB is in a dimeric form, whereas in the TdcB-AMP complex, it exists in a tetrameric form (dimer of dimers).</text>
</comment>
<comment type="similarity">
    <text evidence="2">Belongs to the serine/threonine dehydratase family.</text>
</comment>
<proteinExistence type="inferred from homology"/>
<organism>
    <name type="scientific">Staphylococcus aureus (strain USA300)</name>
    <dbReference type="NCBI Taxonomy" id="367830"/>
    <lineage>
        <taxon>Bacteria</taxon>
        <taxon>Bacillati</taxon>
        <taxon>Bacillota</taxon>
        <taxon>Bacilli</taxon>
        <taxon>Bacillales</taxon>
        <taxon>Staphylococcaceae</taxon>
        <taxon>Staphylococcus</taxon>
    </lineage>
</organism>